<protein>
    <recommendedName>
        <fullName evidence="1">Ethanolamine ammonia-lyase small subunit</fullName>
        <shortName evidence="1">EAL small subunit</shortName>
        <ecNumber evidence="1">4.3.1.7</ecNumber>
    </recommendedName>
</protein>
<accession>B7MXU7</accession>
<name>EUTC_ECO81</name>
<keyword id="KW-1283">Bacterial microcompartment</keyword>
<keyword id="KW-0846">Cobalamin</keyword>
<keyword id="KW-0170">Cobalt</keyword>
<keyword id="KW-0456">Lyase</keyword>
<gene>
    <name evidence="1" type="primary">eutC</name>
    <name type="ordered locus">ECED1_2882</name>
</gene>
<evidence type="ECO:0000255" key="1">
    <source>
        <dbReference type="HAMAP-Rule" id="MF_00601"/>
    </source>
</evidence>
<reference key="1">
    <citation type="journal article" date="2009" name="PLoS Genet.">
        <title>Organised genome dynamics in the Escherichia coli species results in highly diverse adaptive paths.</title>
        <authorList>
            <person name="Touchon M."/>
            <person name="Hoede C."/>
            <person name="Tenaillon O."/>
            <person name="Barbe V."/>
            <person name="Baeriswyl S."/>
            <person name="Bidet P."/>
            <person name="Bingen E."/>
            <person name="Bonacorsi S."/>
            <person name="Bouchier C."/>
            <person name="Bouvet O."/>
            <person name="Calteau A."/>
            <person name="Chiapello H."/>
            <person name="Clermont O."/>
            <person name="Cruveiller S."/>
            <person name="Danchin A."/>
            <person name="Diard M."/>
            <person name="Dossat C."/>
            <person name="Karoui M.E."/>
            <person name="Frapy E."/>
            <person name="Garry L."/>
            <person name="Ghigo J.M."/>
            <person name="Gilles A.M."/>
            <person name="Johnson J."/>
            <person name="Le Bouguenec C."/>
            <person name="Lescat M."/>
            <person name="Mangenot S."/>
            <person name="Martinez-Jehanne V."/>
            <person name="Matic I."/>
            <person name="Nassif X."/>
            <person name="Oztas S."/>
            <person name="Petit M.A."/>
            <person name="Pichon C."/>
            <person name="Rouy Z."/>
            <person name="Ruf C.S."/>
            <person name="Schneider D."/>
            <person name="Tourret J."/>
            <person name="Vacherie B."/>
            <person name="Vallenet D."/>
            <person name="Medigue C."/>
            <person name="Rocha E.P.C."/>
            <person name="Denamur E."/>
        </authorList>
    </citation>
    <scope>NUCLEOTIDE SEQUENCE [LARGE SCALE GENOMIC DNA]</scope>
    <source>
        <strain>ED1a</strain>
    </source>
</reference>
<sequence length="295" mass="31842">MDQKQIEEIVRSVMASMGQTAPAPSEAKCTTTNCAAPVTSESCALDLGSAEAKAWIGVENPHRADVLTELRRSTVARVCTGRAGPRPRTQALLRFLADHSRSKDTVLKEVPEEWVKAQGLLEVRSEISDKNLYLTRPDMGRRLCAEAVEALKAQCVANPDVQVVISDGLSTDAITVNYEEILPPLMAGLKQAGLKVGTPFFVRYGRVKIEDQIGEILGAKVVILLVGERPGLGQSESLSCYAVYSPRMATTVEADRTCISNIHQGGTPPVEAAAVIVDLAKRMLEQKASGINMTR</sequence>
<proteinExistence type="inferred from homology"/>
<organism>
    <name type="scientific">Escherichia coli O81 (strain ED1a)</name>
    <dbReference type="NCBI Taxonomy" id="585397"/>
    <lineage>
        <taxon>Bacteria</taxon>
        <taxon>Pseudomonadati</taxon>
        <taxon>Pseudomonadota</taxon>
        <taxon>Gammaproteobacteria</taxon>
        <taxon>Enterobacterales</taxon>
        <taxon>Enterobacteriaceae</taxon>
        <taxon>Escherichia</taxon>
    </lineage>
</organism>
<feature type="chain" id="PRO_1000147053" description="Ethanolamine ammonia-lyase small subunit">
    <location>
        <begin position="1"/>
        <end position="295"/>
    </location>
</feature>
<feature type="binding site" evidence="1">
    <location>
        <position position="207"/>
    </location>
    <ligand>
        <name>adenosylcob(III)alamin</name>
        <dbReference type="ChEBI" id="CHEBI:18408"/>
    </ligand>
</feature>
<feature type="binding site" evidence="1">
    <location>
        <position position="228"/>
    </location>
    <ligand>
        <name>adenosylcob(III)alamin</name>
        <dbReference type="ChEBI" id="CHEBI:18408"/>
    </ligand>
</feature>
<feature type="binding site" evidence="1">
    <location>
        <position position="258"/>
    </location>
    <ligand>
        <name>adenosylcob(III)alamin</name>
        <dbReference type="ChEBI" id="CHEBI:18408"/>
    </ligand>
</feature>
<comment type="function">
    <text evidence="1">Catalyzes the deamination of various vicinal amino-alcohols to oxo compounds. Allows this organism to utilize ethanolamine as the sole source of nitrogen and carbon in the presence of external vitamin B12.</text>
</comment>
<comment type="catalytic activity">
    <reaction evidence="1">
        <text>ethanolamine = acetaldehyde + NH4(+)</text>
        <dbReference type="Rhea" id="RHEA:15313"/>
        <dbReference type="ChEBI" id="CHEBI:15343"/>
        <dbReference type="ChEBI" id="CHEBI:28938"/>
        <dbReference type="ChEBI" id="CHEBI:57603"/>
        <dbReference type="EC" id="4.3.1.7"/>
    </reaction>
</comment>
<comment type="cofactor">
    <cofactor evidence="1">
        <name>adenosylcob(III)alamin</name>
        <dbReference type="ChEBI" id="CHEBI:18408"/>
    </cofactor>
    <text evidence="1">Binds between the large and small subunits.</text>
</comment>
<comment type="pathway">
    <text evidence="1">Amine and polyamine degradation; ethanolamine degradation.</text>
</comment>
<comment type="subunit">
    <text evidence="1">The basic unit is a heterodimer which dimerizes to form tetramers. The heterotetramers trimerize; 6 large subunits form a core ring with 6 small subunits projecting outwards.</text>
</comment>
<comment type="subcellular location">
    <subcellularLocation>
        <location evidence="1">Bacterial microcompartment</location>
    </subcellularLocation>
</comment>
<comment type="similarity">
    <text evidence="1">Belongs to the EutC family.</text>
</comment>
<dbReference type="EC" id="4.3.1.7" evidence="1"/>
<dbReference type="EMBL" id="CU928162">
    <property type="protein sequence ID" value="CAR08913.1"/>
    <property type="molecule type" value="Genomic_DNA"/>
</dbReference>
<dbReference type="RefSeq" id="WP_000372371.1">
    <property type="nucleotide sequence ID" value="NC_011745.1"/>
</dbReference>
<dbReference type="SMR" id="B7MXU7"/>
<dbReference type="KEGG" id="ecq:ECED1_2882"/>
<dbReference type="HOGENOM" id="CLU_068224_0_0_6"/>
<dbReference type="UniPathway" id="UPA00560"/>
<dbReference type="Proteomes" id="UP000000748">
    <property type="component" value="Chromosome"/>
</dbReference>
<dbReference type="GO" id="GO:0009350">
    <property type="term" value="C:ethanolamine ammonia-lyase complex"/>
    <property type="evidence" value="ECO:0007669"/>
    <property type="project" value="UniProtKB-UniRule"/>
</dbReference>
<dbReference type="GO" id="GO:0031471">
    <property type="term" value="C:ethanolamine degradation polyhedral organelle"/>
    <property type="evidence" value="ECO:0007669"/>
    <property type="project" value="UniProtKB-UniRule"/>
</dbReference>
<dbReference type="GO" id="GO:0031419">
    <property type="term" value="F:cobalamin binding"/>
    <property type="evidence" value="ECO:0007669"/>
    <property type="project" value="UniProtKB-UniRule"/>
</dbReference>
<dbReference type="GO" id="GO:0008851">
    <property type="term" value="F:ethanolamine ammonia-lyase activity"/>
    <property type="evidence" value="ECO:0007669"/>
    <property type="project" value="UniProtKB-UniRule"/>
</dbReference>
<dbReference type="GO" id="GO:0006520">
    <property type="term" value="P:amino acid metabolic process"/>
    <property type="evidence" value="ECO:0007669"/>
    <property type="project" value="InterPro"/>
</dbReference>
<dbReference type="GO" id="GO:0046336">
    <property type="term" value="P:ethanolamine catabolic process"/>
    <property type="evidence" value="ECO:0007669"/>
    <property type="project" value="UniProtKB-UniRule"/>
</dbReference>
<dbReference type="FunFam" id="3.40.50.11240:FF:000001">
    <property type="entry name" value="Ethanolamine ammonia-lyase light chain"/>
    <property type="match status" value="1"/>
</dbReference>
<dbReference type="Gene3D" id="6.10.140.690">
    <property type="match status" value="1"/>
</dbReference>
<dbReference type="Gene3D" id="6.10.250.2060">
    <property type="match status" value="1"/>
</dbReference>
<dbReference type="Gene3D" id="3.40.50.11240">
    <property type="entry name" value="Ethanolamine ammonia-lyase light chain (EutC)"/>
    <property type="match status" value="1"/>
</dbReference>
<dbReference type="HAMAP" id="MF_00601">
    <property type="entry name" value="EutC"/>
    <property type="match status" value="1"/>
</dbReference>
<dbReference type="InterPro" id="IPR009246">
    <property type="entry name" value="EutC"/>
</dbReference>
<dbReference type="InterPro" id="IPR042251">
    <property type="entry name" value="EutC_C"/>
</dbReference>
<dbReference type="NCBIfam" id="NF003971">
    <property type="entry name" value="PRK05465.1"/>
    <property type="match status" value="1"/>
</dbReference>
<dbReference type="PANTHER" id="PTHR39330">
    <property type="entry name" value="ETHANOLAMINE AMMONIA-LYASE LIGHT CHAIN"/>
    <property type="match status" value="1"/>
</dbReference>
<dbReference type="PANTHER" id="PTHR39330:SF1">
    <property type="entry name" value="ETHANOLAMINE AMMONIA-LYASE SMALL SUBUNIT"/>
    <property type="match status" value="1"/>
</dbReference>
<dbReference type="Pfam" id="PF05985">
    <property type="entry name" value="EutC"/>
    <property type="match status" value="1"/>
</dbReference>
<dbReference type="PIRSF" id="PIRSF018982">
    <property type="entry name" value="EutC"/>
    <property type="match status" value="1"/>
</dbReference>